<sequence>MGVTKKPDLNDPVLRAKLAKGMGHNYYGEPAWPNDLLYIFPVVILGTIACNVGLAVLEPSMIGEPADPFATPLEILPEWYFFPVFQILRTVPNKLLGVLLMVSVPAGLLTVPFLENVNKFQNPFRRPVATTVFLIGTAVALWLGIGATLPIDKSLTLGLF</sequence>
<gene>
    <name evidence="2" type="primary">petD</name>
    <name type="ORF">JNC0849</name>
</gene>
<name>PETD_JASNU</name>
<comment type="function">
    <text evidence="2">Component of the cytochrome b6-f complex, which mediates electron transfer between photosystem II (PSII) and photosystem I (PSI), cyclic electron flow around PSI, and state transitions.</text>
</comment>
<comment type="subunit">
    <text evidence="1">The 4 large subunits of the cytochrome b6-f complex are cytochrome b6, subunit IV (17 kDa polypeptide, petD), cytochrome f and the Rieske protein, while the 4 small subunits are petG, petL, petM and petN. The complex functions as a dimer (By similarity).</text>
</comment>
<comment type="subcellular location">
    <subcellularLocation>
        <location evidence="2">Plastid</location>
        <location evidence="2">Chloroplast thylakoid membrane</location>
        <topology evidence="2">Multi-pass membrane protein</topology>
    </subcellularLocation>
</comment>
<comment type="similarity">
    <text evidence="2">Belongs to the cytochrome b family. PetD subfamily.</text>
</comment>
<proteinExistence type="inferred from homology"/>
<keyword id="KW-0150">Chloroplast</keyword>
<keyword id="KW-0249">Electron transport</keyword>
<keyword id="KW-0472">Membrane</keyword>
<keyword id="KW-0602">Photosynthesis</keyword>
<keyword id="KW-0934">Plastid</keyword>
<keyword id="KW-0793">Thylakoid</keyword>
<keyword id="KW-0812">Transmembrane</keyword>
<keyword id="KW-1133">Transmembrane helix</keyword>
<keyword id="KW-0813">Transport</keyword>
<feature type="chain" id="PRO_0000276539" description="Cytochrome b6-f complex subunit 4">
    <location>
        <begin position="1"/>
        <end position="160"/>
    </location>
</feature>
<feature type="transmembrane region" description="Helical" evidence="2">
    <location>
        <begin position="36"/>
        <end position="56"/>
    </location>
</feature>
<feature type="transmembrane region" description="Helical" evidence="2">
    <location>
        <begin position="95"/>
        <end position="115"/>
    </location>
</feature>
<feature type="transmembrane region" description="Helical" evidence="2">
    <location>
        <begin position="131"/>
        <end position="151"/>
    </location>
</feature>
<evidence type="ECO:0000250" key="1"/>
<evidence type="ECO:0000255" key="2">
    <source>
        <dbReference type="HAMAP-Rule" id="MF_01344"/>
    </source>
</evidence>
<dbReference type="EMBL" id="DQ673255">
    <property type="protein sequence ID" value="ABG74657.1"/>
    <property type="molecule type" value="Genomic_DNA"/>
</dbReference>
<dbReference type="RefSeq" id="YP_778520.1">
    <property type="nucleotide sequence ID" value="NC_008407.1"/>
</dbReference>
<dbReference type="SMR" id="Q06RA1"/>
<dbReference type="GeneID" id="4319724"/>
<dbReference type="GO" id="GO:0009535">
    <property type="term" value="C:chloroplast thylakoid membrane"/>
    <property type="evidence" value="ECO:0007669"/>
    <property type="project" value="UniProtKB-SubCell"/>
</dbReference>
<dbReference type="GO" id="GO:0045158">
    <property type="term" value="F:electron transporter, transferring electrons within cytochrome b6/f complex of photosystem II activity"/>
    <property type="evidence" value="ECO:0007669"/>
    <property type="project" value="UniProtKB-UniRule"/>
</dbReference>
<dbReference type="GO" id="GO:0045156">
    <property type="term" value="F:electron transporter, transferring electrons within the cyclic electron transport pathway of photosynthesis activity"/>
    <property type="evidence" value="ECO:0007669"/>
    <property type="project" value="InterPro"/>
</dbReference>
<dbReference type="GO" id="GO:0016491">
    <property type="term" value="F:oxidoreductase activity"/>
    <property type="evidence" value="ECO:0007669"/>
    <property type="project" value="InterPro"/>
</dbReference>
<dbReference type="GO" id="GO:0009767">
    <property type="term" value="P:photosynthetic electron transport chain"/>
    <property type="evidence" value="ECO:0007669"/>
    <property type="project" value="InterPro"/>
</dbReference>
<dbReference type="CDD" id="cd00290">
    <property type="entry name" value="cytochrome_b_C"/>
    <property type="match status" value="1"/>
</dbReference>
<dbReference type="FunFam" id="1.10.287.980:FF:000001">
    <property type="entry name" value="Cytochrome b6-f complex subunit 4"/>
    <property type="match status" value="1"/>
</dbReference>
<dbReference type="FunFam" id="1.20.5.510:FF:000002">
    <property type="entry name" value="Cytochrome b6-f complex subunit 4"/>
    <property type="match status" value="1"/>
</dbReference>
<dbReference type="Gene3D" id="1.10.287.980">
    <property type="entry name" value="plastocyanin oxidoreductase"/>
    <property type="match status" value="1"/>
</dbReference>
<dbReference type="Gene3D" id="1.20.5.510">
    <property type="entry name" value="Single helix bin"/>
    <property type="match status" value="1"/>
</dbReference>
<dbReference type="HAMAP" id="MF_01344">
    <property type="entry name" value="Cytb6_f_subIV"/>
    <property type="match status" value="1"/>
</dbReference>
<dbReference type="InterPro" id="IPR005798">
    <property type="entry name" value="Cyt_b/b6_C"/>
</dbReference>
<dbReference type="InterPro" id="IPR036150">
    <property type="entry name" value="Cyt_b/b6_C_sf"/>
</dbReference>
<dbReference type="InterPro" id="IPR005870">
    <property type="entry name" value="Cyt_b6/f_cplx_suIV"/>
</dbReference>
<dbReference type="InterPro" id="IPR048260">
    <property type="entry name" value="Cytochrome_b_C_euk/bac"/>
</dbReference>
<dbReference type="NCBIfam" id="TIGR01156">
    <property type="entry name" value="cytb6_f_IV"/>
    <property type="match status" value="1"/>
</dbReference>
<dbReference type="PANTHER" id="PTHR19271">
    <property type="entry name" value="CYTOCHROME B"/>
    <property type="match status" value="1"/>
</dbReference>
<dbReference type="PANTHER" id="PTHR19271:SF16">
    <property type="entry name" value="CYTOCHROME B"/>
    <property type="match status" value="1"/>
</dbReference>
<dbReference type="Pfam" id="PF00032">
    <property type="entry name" value="Cytochrom_B_C"/>
    <property type="match status" value="1"/>
</dbReference>
<dbReference type="PIRSF" id="PIRSF000033">
    <property type="entry name" value="B6f_17K"/>
    <property type="match status" value="1"/>
</dbReference>
<dbReference type="SUPFAM" id="SSF81648">
    <property type="entry name" value="a domain/subunit of cytochrome bc1 complex (Ubiquinol-cytochrome c reductase)"/>
    <property type="match status" value="1"/>
</dbReference>
<dbReference type="PROSITE" id="PS51003">
    <property type="entry name" value="CYTB_CTER"/>
    <property type="match status" value="1"/>
</dbReference>
<organism>
    <name type="scientific">Jasminum nudiflorum</name>
    <name type="common">Winter jasmine</name>
    <dbReference type="NCBI Taxonomy" id="126431"/>
    <lineage>
        <taxon>Eukaryota</taxon>
        <taxon>Viridiplantae</taxon>
        <taxon>Streptophyta</taxon>
        <taxon>Embryophyta</taxon>
        <taxon>Tracheophyta</taxon>
        <taxon>Spermatophyta</taxon>
        <taxon>Magnoliopsida</taxon>
        <taxon>eudicotyledons</taxon>
        <taxon>Gunneridae</taxon>
        <taxon>Pentapetalae</taxon>
        <taxon>asterids</taxon>
        <taxon>lamiids</taxon>
        <taxon>Lamiales</taxon>
        <taxon>Oleaceae</taxon>
        <taxon>Jasmineae</taxon>
        <taxon>Jasminum</taxon>
    </lineage>
</organism>
<geneLocation type="chloroplast"/>
<reference key="1">
    <citation type="journal article" date="2007" name="Mol. Biol. Evol.">
        <title>Gene relocations within chloroplast genomes of Jasminum and Menodora (Oleaceae) are due to multiple, overlapping inversions.</title>
        <authorList>
            <person name="Lee H.-L."/>
            <person name="Jansen R.K."/>
            <person name="Chumley T.W."/>
            <person name="Kim K.-J."/>
        </authorList>
    </citation>
    <scope>NUCLEOTIDE SEQUENCE [LARGE SCALE GENOMIC DNA]</scope>
</reference>
<accession>Q06RA1</accession>
<protein>
    <recommendedName>
        <fullName evidence="2">Cytochrome b6-f complex subunit 4</fullName>
    </recommendedName>
    <alternativeName>
        <fullName evidence="2">17 kDa polypeptide</fullName>
    </alternativeName>
</protein>